<name>CNCG_ICTTR</name>
<sequence length="83" mass="9015">MSDNTTLAPPAASQAPATPRKGPPKFKQRQTRQFKSKPPKKGVKGFGDDIPGMEGLGTDITVICPWEAFSHLELHELAQFGII</sequence>
<evidence type="ECO:0000250" key="1"/>
<evidence type="ECO:0000256" key="2">
    <source>
        <dbReference type="SAM" id="MobiDB-lite"/>
    </source>
</evidence>
<evidence type="ECO:0000305" key="3"/>
<comment type="function">
    <text>Participates in processes of transmission and amplification of the visual signal. cGMP-PDEs are the effector molecules in G-protein-mediated phototransduction in vertebrate rods and cones.</text>
</comment>
<comment type="catalytic activity">
    <reaction>
        <text>3',5'-cyclic GMP + H2O = GMP + H(+)</text>
        <dbReference type="Rhea" id="RHEA:16957"/>
        <dbReference type="ChEBI" id="CHEBI:15377"/>
        <dbReference type="ChEBI" id="CHEBI:15378"/>
        <dbReference type="ChEBI" id="CHEBI:57746"/>
        <dbReference type="ChEBI" id="CHEBI:58115"/>
        <dbReference type="EC" id="3.1.4.35"/>
    </reaction>
</comment>
<comment type="subunit">
    <text>Tetramer composed of two catalytic chains (alpha and beta), and two inhibitory chains (gamma).</text>
</comment>
<comment type="domain">
    <text evidence="1">The C-terminal region is important in conferring inhibition.</text>
</comment>
<comment type="similarity">
    <text evidence="3">Belongs to the rod/cone cGMP-PDE gamma subunit family.</text>
</comment>
<accession>O55175</accession>
<gene>
    <name type="primary">PDE6H</name>
</gene>
<proteinExistence type="inferred from homology"/>
<dbReference type="EC" id="3.1.4.35"/>
<dbReference type="EMBL" id="AJ001390">
    <property type="protein sequence ID" value="CAA04720.1"/>
    <property type="molecule type" value="mRNA"/>
</dbReference>
<dbReference type="RefSeq" id="XP_005331938.1">
    <property type="nucleotide sequence ID" value="XM_005331881.1"/>
</dbReference>
<dbReference type="SMR" id="O55175"/>
<dbReference type="FunCoup" id="O55175">
    <property type="interactions" value="133"/>
</dbReference>
<dbReference type="STRING" id="43179.ENSSTOP00000008149"/>
<dbReference type="Ensembl" id="ENSSTOT00000009089.3">
    <property type="protein sequence ID" value="ENSSTOP00000008149.2"/>
    <property type="gene ID" value="ENSSTOG00000009094.3"/>
</dbReference>
<dbReference type="GeneID" id="101975706"/>
<dbReference type="KEGG" id="iti:101975706"/>
<dbReference type="CTD" id="5149"/>
<dbReference type="eggNOG" id="ENOG502S4P1">
    <property type="taxonomic scope" value="Eukaryota"/>
</dbReference>
<dbReference type="GeneTree" id="ENSGT00390000013260"/>
<dbReference type="HOGENOM" id="CLU_170469_0_0_1"/>
<dbReference type="InParanoid" id="O55175"/>
<dbReference type="OMA" id="WAARMEN"/>
<dbReference type="OrthoDB" id="8525078at2759"/>
<dbReference type="TreeFam" id="TF333297"/>
<dbReference type="Proteomes" id="UP000005215">
    <property type="component" value="Unassembled WGS sequence"/>
</dbReference>
<dbReference type="GO" id="GO:0042622">
    <property type="term" value="C:photoreceptor outer segment membrane"/>
    <property type="evidence" value="ECO:0007669"/>
    <property type="project" value="TreeGrafter"/>
</dbReference>
<dbReference type="GO" id="GO:0047555">
    <property type="term" value="F:3',5'-cyclic-GMP phosphodiesterase activity"/>
    <property type="evidence" value="ECO:0007669"/>
    <property type="project" value="UniProtKB-EC"/>
</dbReference>
<dbReference type="GO" id="GO:0030553">
    <property type="term" value="F:cGMP binding"/>
    <property type="evidence" value="ECO:0007669"/>
    <property type="project" value="InterPro"/>
</dbReference>
<dbReference type="GO" id="GO:0045742">
    <property type="term" value="P:positive regulation of epidermal growth factor receptor signaling pathway"/>
    <property type="evidence" value="ECO:0007669"/>
    <property type="project" value="Ensembl"/>
</dbReference>
<dbReference type="GO" id="GO:0045745">
    <property type="term" value="P:positive regulation of G protein-coupled receptor signaling pathway"/>
    <property type="evidence" value="ECO:0007669"/>
    <property type="project" value="Ensembl"/>
</dbReference>
<dbReference type="GO" id="GO:0043410">
    <property type="term" value="P:positive regulation of MAPK cascade"/>
    <property type="evidence" value="ECO:0007669"/>
    <property type="project" value="Ensembl"/>
</dbReference>
<dbReference type="GO" id="GO:0007601">
    <property type="term" value="P:visual perception"/>
    <property type="evidence" value="ECO:0007669"/>
    <property type="project" value="UniProtKB-KW"/>
</dbReference>
<dbReference type="FunFam" id="4.10.1120.10:FF:000001">
    <property type="entry name" value="retinal rod rhodopsin-sensitive cGMP 3',5'-cyclic phosphodiesterase subunit gamma"/>
    <property type="match status" value="1"/>
</dbReference>
<dbReference type="Gene3D" id="4.10.1120.10">
    <property type="entry name" value="Retinal cGMP phosphodiesterase, gamma subunit"/>
    <property type="match status" value="1"/>
</dbReference>
<dbReference type="InterPro" id="IPR006952">
    <property type="entry name" value="PDE6_gamma"/>
</dbReference>
<dbReference type="InterPro" id="IPR037030">
    <property type="entry name" value="PDE6_gamma_sf"/>
</dbReference>
<dbReference type="PANTHER" id="PTHR12122">
    <property type="entry name" value="RETINAL CONE RHODOPSIN-SENSITIVE CGMP 3',5'-CYCLIC PHOSPHODIESTERASE GAMMA-SUBUNIT-RELATED"/>
    <property type="match status" value="1"/>
</dbReference>
<dbReference type="PANTHER" id="PTHR12122:SF5">
    <property type="entry name" value="RETINAL CONE RHODOPSIN-SENSITIVE CGMP 3',5'-CYCLIC PHOSPHODIESTERASE SUBUNIT GAMMA"/>
    <property type="match status" value="1"/>
</dbReference>
<dbReference type="Pfam" id="PF04868">
    <property type="entry name" value="PDE6_gamma"/>
    <property type="match status" value="1"/>
</dbReference>
<dbReference type="PIRSF" id="PIRSF000969">
    <property type="entry name" value="35-cGMP_Pdiase_g"/>
    <property type="match status" value="1"/>
</dbReference>
<organism>
    <name type="scientific">Ictidomys tridecemlineatus</name>
    <name type="common">Thirteen-lined ground squirrel</name>
    <name type="synonym">Spermophilus tridecemlineatus</name>
    <dbReference type="NCBI Taxonomy" id="43179"/>
    <lineage>
        <taxon>Eukaryota</taxon>
        <taxon>Metazoa</taxon>
        <taxon>Chordata</taxon>
        <taxon>Craniata</taxon>
        <taxon>Vertebrata</taxon>
        <taxon>Euteleostomi</taxon>
        <taxon>Mammalia</taxon>
        <taxon>Eutheria</taxon>
        <taxon>Euarchontoglires</taxon>
        <taxon>Glires</taxon>
        <taxon>Rodentia</taxon>
        <taxon>Sciuromorpha</taxon>
        <taxon>Sciuridae</taxon>
        <taxon>Xerinae</taxon>
        <taxon>Marmotini</taxon>
        <taxon>Ictidomys</taxon>
    </lineage>
</organism>
<protein>
    <recommendedName>
        <fullName>Retinal cone rhodopsin-sensitive cGMP 3',5'-cyclic phosphodiesterase subunit gamma</fullName>
        <shortName>GMP-PDE gamma</shortName>
        <ecNumber>3.1.4.35</ecNumber>
    </recommendedName>
</protein>
<feature type="chain" id="PRO_0000166123" description="Retinal cone rhodopsin-sensitive cGMP 3',5'-cyclic phosphodiesterase subunit gamma">
    <location>
        <begin position="1"/>
        <end position="83"/>
    </location>
</feature>
<feature type="region of interest" description="Disordered" evidence="2">
    <location>
        <begin position="1"/>
        <end position="51"/>
    </location>
</feature>
<feature type="compositionally biased region" description="Low complexity" evidence="2">
    <location>
        <begin position="1"/>
        <end position="19"/>
    </location>
</feature>
<feature type="compositionally biased region" description="Basic residues" evidence="2">
    <location>
        <begin position="22"/>
        <end position="43"/>
    </location>
</feature>
<reference key="1">
    <citation type="journal article" date="1998" name="Brain Res. Mol. Brain Res.">
        <title>Cloning of a cyclic GMP phosphodiesterase gamma subunit from the ground squirrel retina.</title>
        <authorList>
            <person name="von Schantz M."/>
            <person name="Szel A."/>
            <person name="van Veen T."/>
            <person name="Farber D.B."/>
        </authorList>
    </citation>
    <scope>NUCLEOTIDE SEQUENCE [MRNA]</scope>
    <source>
        <tissue>Retina</tissue>
    </source>
</reference>
<keyword id="KW-0140">cGMP</keyword>
<keyword id="KW-0378">Hydrolase</keyword>
<keyword id="KW-1185">Reference proteome</keyword>
<keyword id="KW-0716">Sensory transduction</keyword>
<keyword id="KW-0844">Vision</keyword>